<accession>Q9ZJR8</accession>
<gene>
    <name evidence="1" type="primary">rplV</name>
    <name type="ordered locus">jhp_1234</name>
</gene>
<comment type="function">
    <text evidence="1">This protein binds specifically to 23S rRNA; its binding is stimulated by other ribosomal proteins, e.g. L4, L17, and L20. It is important during the early stages of 50S assembly. It makes multiple contacts with different domains of the 23S rRNA in the assembled 50S subunit and ribosome (By similarity).</text>
</comment>
<comment type="function">
    <text evidence="1">The globular domain of the protein is located near the polypeptide exit tunnel on the outside of the subunit, while an extended beta-hairpin is found that lines the wall of the exit tunnel in the center of the 70S ribosome.</text>
</comment>
<comment type="subunit">
    <text evidence="1">Part of the 50S ribosomal subunit.</text>
</comment>
<comment type="similarity">
    <text evidence="1">Belongs to the universal ribosomal protein uL22 family.</text>
</comment>
<reference key="1">
    <citation type="journal article" date="1999" name="Nature">
        <title>Genomic sequence comparison of two unrelated isolates of the human gastric pathogen Helicobacter pylori.</title>
        <authorList>
            <person name="Alm R.A."/>
            <person name="Ling L.-S.L."/>
            <person name="Moir D.T."/>
            <person name="King B.L."/>
            <person name="Brown E.D."/>
            <person name="Doig P.C."/>
            <person name="Smith D.R."/>
            <person name="Noonan B."/>
            <person name="Guild B.C."/>
            <person name="deJonge B.L."/>
            <person name="Carmel G."/>
            <person name="Tummino P.J."/>
            <person name="Caruso A."/>
            <person name="Uria-Nickelsen M."/>
            <person name="Mills D.M."/>
            <person name="Ives C."/>
            <person name="Gibson R."/>
            <person name="Merberg D."/>
            <person name="Mills S.D."/>
            <person name="Jiang Q."/>
            <person name="Taylor D.E."/>
            <person name="Vovis G.F."/>
            <person name="Trust T.J."/>
        </authorList>
    </citation>
    <scope>NUCLEOTIDE SEQUENCE [LARGE SCALE GENOMIC DNA]</scope>
    <source>
        <strain>J99 / ATCC 700824</strain>
    </source>
</reference>
<feature type="chain" id="PRO_0000125164" description="Large ribosomal subunit protein uL22">
    <location>
        <begin position="1"/>
        <end position="122"/>
    </location>
</feature>
<feature type="region of interest" description="Disordered" evidence="2">
    <location>
        <begin position="102"/>
        <end position="122"/>
    </location>
</feature>
<sequence>MSKALLKFVRLSPTKARLIARQIQGMNAELAIASLEFTPNKAARVLSKVVASAVANGSLDAKSALIVSCRVDAGPVLRRSIPRAKGRATAIRKPTSHVFVEVAEGKEMKSSKSHKKNQAEGK</sequence>
<name>RL22_HELPJ</name>
<evidence type="ECO:0000255" key="1">
    <source>
        <dbReference type="HAMAP-Rule" id="MF_01331"/>
    </source>
</evidence>
<evidence type="ECO:0000256" key="2">
    <source>
        <dbReference type="SAM" id="MobiDB-lite"/>
    </source>
</evidence>
<evidence type="ECO:0000305" key="3"/>
<proteinExistence type="inferred from homology"/>
<protein>
    <recommendedName>
        <fullName evidence="1">Large ribosomal subunit protein uL22</fullName>
    </recommendedName>
    <alternativeName>
        <fullName evidence="3">50S ribosomal protein L22</fullName>
    </alternativeName>
</protein>
<keyword id="KW-0687">Ribonucleoprotein</keyword>
<keyword id="KW-0689">Ribosomal protein</keyword>
<keyword id="KW-0694">RNA-binding</keyword>
<keyword id="KW-0699">rRNA-binding</keyword>
<dbReference type="EMBL" id="AE001439">
    <property type="protein sequence ID" value="AAD06800.1"/>
    <property type="molecule type" value="Genomic_DNA"/>
</dbReference>
<dbReference type="PIR" id="B71835">
    <property type="entry name" value="B71835"/>
</dbReference>
<dbReference type="RefSeq" id="WP_000030349.1">
    <property type="nucleotide sequence ID" value="NZ_CP011330.1"/>
</dbReference>
<dbReference type="SMR" id="Q9ZJR8"/>
<dbReference type="KEGG" id="hpj:jhp_1234"/>
<dbReference type="PATRIC" id="fig|85963.30.peg.1337"/>
<dbReference type="eggNOG" id="COG0091">
    <property type="taxonomic scope" value="Bacteria"/>
</dbReference>
<dbReference type="Proteomes" id="UP000000804">
    <property type="component" value="Chromosome"/>
</dbReference>
<dbReference type="GO" id="GO:0022625">
    <property type="term" value="C:cytosolic large ribosomal subunit"/>
    <property type="evidence" value="ECO:0007669"/>
    <property type="project" value="TreeGrafter"/>
</dbReference>
<dbReference type="GO" id="GO:0019843">
    <property type="term" value="F:rRNA binding"/>
    <property type="evidence" value="ECO:0007669"/>
    <property type="project" value="UniProtKB-UniRule"/>
</dbReference>
<dbReference type="GO" id="GO:0003735">
    <property type="term" value="F:structural constituent of ribosome"/>
    <property type="evidence" value="ECO:0007669"/>
    <property type="project" value="InterPro"/>
</dbReference>
<dbReference type="GO" id="GO:0006412">
    <property type="term" value="P:translation"/>
    <property type="evidence" value="ECO:0007669"/>
    <property type="project" value="UniProtKB-UniRule"/>
</dbReference>
<dbReference type="CDD" id="cd00336">
    <property type="entry name" value="Ribosomal_L22"/>
    <property type="match status" value="1"/>
</dbReference>
<dbReference type="FunFam" id="3.90.470.10:FF:000007">
    <property type="entry name" value="50S ribosomal protein L22"/>
    <property type="match status" value="1"/>
</dbReference>
<dbReference type="Gene3D" id="3.90.470.10">
    <property type="entry name" value="Ribosomal protein L22/L17"/>
    <property type="match status" value="1"/>
</dbReference>
<dbReference type="HAMAP" id="MF_01331_B">
    <property type="entry name" value="Ribosomal_uL22_B"/>
    <property type="match status" value="1"/>
</dbReference>
<dbReference type="InterPro" id="IPR001063">
    <property type="entry name" value="Ribosomal_uL22"/>
</dbReference>
<dbReference type="InterPro" id="IPR005727">
    <property type="entry name" value="Ribosomal_uL22_bac/chlpt-type"/>
</dbReference>
<dbReference type="InterPro" id="IPR047867">
    <property type="entry name" value="Ribosomal_uL22_bac/org-type"/>
</dbReference>
<dbReference type="InterPro" id="IPR018260">
    <property type="entry name" value="Ribosomal_uL22_CS"/>
</dbReference>
<dbReference type="InterPro" id="IPR036394">
    <property type="entry name" value="Ribosomal_uL22_sf"/>
</dbReference>
<dbReference type="NCBIfam" id="TIGR01044">
    <property type="entry name" value="rplV_bact"/>
    <property type="match status" value="1"/>
</dbReference>
<dbReference type="PANTHER" id="PTHR13501">
    <property type="entry name" value="CHLOROPLAST 50S RIBOSOMAL PROTEIN L22-RELATED"/>
    <property type="match status" value="1"/>
</dbReference>
<dbReference type="PANTHER" id="PTHR13501:SF8">
    <property type="entry name" value="LARGE RIBOSOMAL SUBUNIT PROTEIN UL22M"/>
    <property type="match status" value="1"/>
</dbReference>
<dbReference type="Pfam" id="PF00237">
    <property type="entry name" value="Ribosomal_L22"/>
    <property type="match status" value="1"/>
</dbReference>
<dbReference type="SUPFAM" id="SSF54843">
    <property type="entry name" value="Ribosomal protein L22"/>
    <property type="match status" value="1"/>
</dbReference>
<dbReference type="PROSITE" id="PS00464">
    <property type="entry name" value="RIBOSOMAL_L22"/>
    <property type="match status" value="1"/>
</dbReference>
<organism>
    <name type="scientific">Helicobacter pylori (strain J99 / ATCC 700824)</name>
    <name type="common">Campylobacter pylori J99</name>
    <dbReference type="NCBI Taxonomy" id="85963"/>
    <lineage>
        <taxon>Bacteria</taxon>
        <taxon>Pseudomonadati</taxon>
        <taxon>Campylobacterota</taxon>
        <taxon>Epsilonproteobacteria</taxon>
        <taxon>Campylobacterales</taxon>
        <taxon>Helicobacteraceae</taxon>
        <taxon>Helicobacter</taxon>
    </lineage>
</organism>